<dbReference type="EMBL" id="GU721053">
    <property type="protein sequence ID" value="ADE28870.1"/>
    <property type="molecule type" value="mRNA"/>
</dbReference>
<dbReference type="GO" id="GO:0005576">
    <property type="term" value="C:extracellular region"/>
    <property type="evidence" value="ECO:0007669"/>
    <property type="project" value="UniProtKB-SubCell"/>
</dbReference>
<dbReference type="GO" id="GO:0090729">
    <property type="term" value="F:toxin activity"/>
    <property type="evidence" value="ECO:0007669"/>
    <property type="project" value="UniProtKB-KW"/>
</dbReference>
<organism>
    <name type="scientific">Gemmula speciosa</name>
    <name type="common">Splendid gem-turris</name>
    <name type="synonym">Pleurotoma speciosa</name>
    <dbReference type="NCBI Taxonomy" id="439592"/>
    <lineage>
        <taxon>Eukaryota</taxon>
        <taxon>Metazoa</taxon>
        <taxon>Spiralia</taxon>
        <taxon>Lophotrochozoa</taxon>
        <taxon>Mollusca</taxon>
        <taxon>Gastropoda</taxon>
        <taxon>Caenogastropoda</taxon>
        <taxon>Neogastropoda</taxon>
        <taxon>Conoidea</taxon>
        <taxon>Turridae</taxon>
        <taxon>Gemmula</taxon>
    </lineage>
</organism>
<reference key="1">
    <citation type="submission" date="2010-02" db="EMBL/GenBank/DDBJ databases">
        <title>Cysteine-rich toxin gene families from Gemmula speciosa (Reeve, 1843).</title>
        <authorList>
            <person name="Uichanco J.A.V."/>
            <person name="Planta J.R.G."/>
            <person name="Santos A.D."/>
            <person name="Concepcion G.P."/>
        </authorList>
    </citation>
    <scope>NUCLEOTIDE SEQUENCE [MRNA]</scope>
    <source>
        <tissue>Venom duct</tissue>
    </source>
</reference>
<accession>D5KXH2</accession>
<name>TU94_GEMSP</name>
<sequence length="82" mass="9043">MGFYMLLTVALLLTSLMNVEATPVDQAERSALEKSGLGNRIQPRYDNCGDAEADCYQSKCMDGETYDEECEASCNYVVANCI</sequence>
<keyword id="KW-1015">Disulfide bond</keyword>
<keyword id="KW-0528">Neurotoxin</keyword>
<keyword id="KW-0964">Secreted</keyword>
<keyword id="KW-0732">Signal</keyword>
<keyword id="KW-0800">Toxin</keyword>
<evidence type="ECO:0000250" key="1"/>
<evidence type="ECO:0000255" key="2"/>
<feature type="signal peptide" evidence="2">
    <location>
        <begin position="1"/>
        <end position="21"/>
    </location>
</feature>
<feature type="propeptide" id="PRO_0000415068" evidence="1">
    <location>
        <begin position="22"/>
        <end position="39"/>
    </location>
</feature>
<feature type="peptide" id="PRO_0000415069" description="Turripeptide IX-04">
    <location>
        <begin position="41"/>
        <end position="82"/>
    </location>
</feature>
<feature type="disulfide bond" evidence="1">
    <location>
        <begin position="48"/>
        <end position="70"/>
    </location>
</feature>
<feature type="disulfide bond" evidence="1">
    <location>
        <begin position="55"/>
        <end position="74"/>
    </location>
</feature>
<feature type="disulfide bond" evidence="1">
    <location>
        <begin position="60"/>
        <end position="81"/>
    </location>
</feature>
<comment type="subcellular location">
    <subcellularLocation>
        <location evidence="1">Secreted</location>
    </subcellularLocation>
</comment>
<comment type="tissue specificity">
    <text>Expressed by the venom duct.</text>
</comment>
<comment type="domain">
    <text>The cysteine framework is IX (C-C-C-C-C-C).</text>
</comment>
<proteinExistence type="evidence at transcript level"/>
<protein>
    <recommendedName>
        <fullName>Turripeptide IX-04</fullName>
    </recommendedName>
</protein>